<evidence type="ECO:0000250" key="1"/>
<evidence type="ECO:0000255" key="2"/>
<evidence type="ECO:0000303" key="3">
    <source>
    </source>
</evidence>
<evidence type="ECO:0000305" key="4"/>
<name>VEGFA_AGKPI</name>
<sequence>MNFLLTWIHWGLAALLYFHNAKVLQAAPAHGDGDRQQSEVIPFMTVYERSVCRPIETMVDIFQEYPDEVEYILKPPCVALMRCGGCCNDEALECVPTELYNVTMEIMKLKPYQSQHIHPMSFQQHSKCECRPKKETRIIQENHCEPCSERRKHLYKQDPLTCKCSCKFTDSRCKSKQLELNERTCRCEKPRR</sequence>
<dbReference type="EMBL" id="FJ554638">
    <property type="protein sequence ID" value="ACN22041.1"/>
    <property type="molecule type" value="mRNA"/>
</dbReference>
<dbReference type="SMR" id="C0K3N4"/>
<dbReference type="GO" id="GO:0005615">
    <property type="term" value="C:extracellular space"/>
    <property type="evidence" value="ECO:0007669"/>
    <property type="project" value="TreeGrafter"/>
</dbReference>
<dbReference type="GO" id="GO:0016020">
    <property type="term" value="C:membrane"/>
    <property type="evidence" value="ECO:0007669"/>
    <property type="project" value="InterPro"/>
</dbReference>
<dbReference type="GO" id="GO:0042056">
    <property type="term" value="F:chemoattractant activity"/>
    <property type="evidence" value="ECO:0007669"/>
    <property type="project" value="TreeGrafter"/>
</dbReference>
<dbReference type="GO" id="GO:0008083">
    <property type="term" value="F:growth factor activity"/>
    <property type="evidence" value="ECO:0007669"/>
    <property type="project" value="UniProtKB-KW"/>
</dbReference>
<dbReference type="GO" id="GO:0008201">
    <property type="term" value="F:heparin binding"/>
    <property type="evidence" value="ECO:0007669"/>
    <property type="project" value="UniProtKB-KW"/>
</dbReference>
<dbReference type="GO" id="GO:0005172">
    <property type="term" value="F:vascular endothelial growth factor receptor binding"/>
    <property type="evidence" value="ECO:0007669"/>
    <property type="project" value="TreeGrafter"/>
</dbReference>
<dbReference type="GO" id="GO:0030154">
    <property type="term" value="P:cell differentiation"/>
    <property type="evidence" value="ECO:0007669"/>
    <property type="project" value="UniProtKB-KW"/>
</dbReference>
<dbReference type="GO" id="GO:0050930">
    <property type="term" value="P:induction of positive chemotaxis"/>
    <property type="evidence" value="ECO:0007669"/>
    <property type="project" value="TreeGrafter"/>
</dbReference>
<dbReference type="GO" id="GO:0045766">
    <property type="term" value="P:positive regulation of angiogenesis"/>
    <property type="evidence" value="ECO:0007669"/>
    <property type="project" value="TreeGrafter"/>
</dbReference>
<dbReference type="GO" id="GO:0051781">
    <property type="term" value="P:positive regulation of cell division"/>
    <property type="evidence" value="ECO:0007669"/>
    <property type="project" value="UniProtKB-KW"/>
</dbReference>
<dbReference type="GO" id="GO:0001938">
    <property type="term" value="P:positive regulation of endothelial cell proliferation"/>
    <property type="evidence" value="ECO:0000250"/>
    <property type="project" value="UniProtKB"/>
</dbReference>
<dbReference type="GO" id="GO:0051894">
    <property type="term" value="P:positive regulation of focal adhesion assembly"/>
    <property type="evidence" value="ECO:0000250"/>
    <property type="project" value="UniProtKB"/>
</dbReference>
<dbReference type="GO" id="GO:0060754">
    <property type="term" value="P:positive regulation of mast cell chemotaxis"/>
    <property type="evidence" value="ECO:0007669"/>
    <property type="project" value="TreeGrafter"/>
</dbReference>
<dbReference type="GO" id="GO:0050731">
    <property type="term" value="P:positive regulation of peptidyl-tyrosine phosphorylation"/>
    <property type="evidence" value="ECO:0000250"/>
    <property type="project" value="UniProtKB"/>
</dbReference>
<dbReference type="GO" id="GO:0031334">
    <property type="term" value="P:positive regulation of protein-containing complex assembly"/>
    <property type="evidence" value="ECO:0000250"/>
    <property type="project" value="UniProtKB"/>
</dbReference>
<dbReference type="GO" id="GO:0001666">
    <property type="term" value="P:response to hypoxia"/>
    <property type="evidence" value="ECO:0007669"/>
    <property type="project" value="TreeGrafter"/>
</dbReference>
<dbReference type="GO" id="GO:0002040">
    <property type="term" value="P:sprouting angiogenesis"/>
    <property type="evidence" value="ECO:0007669"/>
    <property type="project" value="TreeGrafter"/>
</dbReference>
<dbReference type="GO" id="GO:0048010">
    <property type="term" value="P:vascular endothelial growth factor receptor signaling pathway"/>
    <property type="evidence" value="ECO:0007669"/>
    <property type="project" value="TreeGrafter"/>
</dbReference>
<dbReference type="GO" id="GO:0038084">
    <property type="term" value="P:vascular endothelial growth factor signaling pathway"/>
    <property type="evidence" value="ECO:0007669"/>
    <property type="project" value="TreeGrafter"/>
</dbReference>
<dbReference type="CDD" id="cd00135">
    <property type="entry name" value="PDGF"/>
    <property type="match status" value="1"/>
</dbReference>
<dbReference type="FunFam" id="2.10.160.10:FF:000001">
    <property type="entry name" value="Vascular endothelial growth factor A"/>
    <property type="match status" value="1"/>
</dbReference>
<dbReference type="FunFam" id="2.10.90.10:FF:000009">
    <property type="entry name" value="Vascular endothelial growth factor A"/>
    <property type="match status" value="1"/>
</dbReference>
<dbReference type="Gene3D" id="2.10.90.10">
    <property type="entry name" value="Cystine-knot cytokines"/>
    <property type="match status" value="1"/>
</dbReference>
<dbReference type="Gene3D" id="2.10.160.10">
    <property type="entry name" value="Vascular endothelial growth factor, heparin-binding domain"/>
    <property type="match status" value="1"/>
</dbReference>
<dbReference type="InterPro" id="IPR029034">
    <property type="entry name" value="Cystine-knot_cytokine"/>
</dbReference>
<dbReference type="InterPro" id="IPR023581">
    <property type="entry name" value="PD_growth_factor_CS"/>
</dbReference>
<dbReference type="InterPro" id="IPR000072">
    <property type="entry name" value="PDGF/VEGF_dom"/>
</dbReference>
<dbReference type="InterPro" id="IPR050507">
    <property type="entry name" value="PDGF/VEGF_growth_factor"/>
</dbReference>
<dbReference type="InterPro" id="IPR027928">
    <property type="entry name" value="VEGF_C"/>
</dbReference>
<dbReference type="InterPro" id="IPR036841">
    <property type="entry name" value="VEGF_C_sf"/>
</dbReference>
<dbReference type="PANTHER" id="PTHR12025">
    <property type="entry name" value="VASCULAR ENDOTHELIAL GROWTH FACTOR"/>
    <property type="match status" value="1"/>
</dbReference>
<dbReference type="PANTHER" id="PTHR12025:SF5">
    <property type="entry name" value="VASCULAR ENDOTHELIAL GROWTH FACTOR A, LONG FORM"/>
    <property type="match status" value="1"/>
</dbReference>
<dbReference type="Pfam" id="PF00341">
    <property type="entry name" value="PDGF"/>
    <property type="match status" value="1"/>
</dbReference>
<dbReference type="Pfam" id="PF14554">
    <property type="entry name" value="VEGF_C"/>
    <property type="match status" value="1"/>
</dbReference>
<dbReference type="SMART" id="SM00141">
    <property type="entry name" value="PDGF"/>
    <property type="match status" value="1"/>
</dbReference>
<dbReference type="SUPFAM" id="SSF57501">
    <property type="entry name" value="Cystine-knot cytokines"/>
    <property type="match status" value="1"/>
</dbReference>
<dbReference type="SUPFAM" id="SSF57593">
    <property type="entry name" value="Heparin-binding domain from vascular endothelial growth factor"/>
    <property type="match status" value="1"/>
</dbReference>
<dbReference type="PROSITE" id="PS00249">
    <property type="entry name" value="PDGF_1"/>
    <property type="match status" value="1"/>
</dbReference>
<dbReference type="PROSITE" id="PS50278">
    <property type="entry name" value="PDGF_2"/>
    <property type="match status" value="1"/>
</dbReference>
<organism>
    <name type="scientific">Agkistrodon piscivorus piscivorus</name>
    <name type="common">Eastern cottonmouth</name>
    <dbReference type="NCBI Taxonomy" id="8716"/>
    <lineage>
        <taxon>Eukaryota</taxon>
        <taxon>Metazoa</taxon>
        <taxon>Chordata</taxon>
        <taxon>Craniata</taxon>
        <taxon>Vertebrata</taxon>
        <taxon>Euteleostomi</taxon>
        <taxon>Lepidosauria</taxon>
        <taxon>Squamata</taxon>
        <taxon>Bifurcata</taxon>
        <taxon>Unidentata</taxon>
        <taxon>Episquamata</taxon>
        <taxon>Toxicofera</taxon>
        <taxon>Serpentes</taxon>
        <taxon>Colubroidea</taxon>
        <taxon>Viperidae</taxon>
        <taxon>Crotalinae</taxon>
        <taxon>Agkistrodon</taxon>
    </lineage>
</organism>
<proteinExistence type="evidence at transcript level"/>
<protein>
    <recommendedName>
        <fullName evidence="3">Vascular endothelial growth factor A</fullName>
        <shortName evidence="3">VEGF-A</shortName>
    </recommendedName>
</protein>
<accession>C0K3N4</accession>
<feature type="signal peptide" evidence="2">
    <location>
        <begin position="1"/>
        <end position="26"/>
    </location>
</feature>
<feature type="chain" id="PRO_5000452063" description="Vascular endothelial growth factor A">
    <location>
        <begin position="27"/>
        <end position="192"/>
    </location>
</feature>
<feature type="glycosylation site" description="N-linked (GlcNAc...) asparagine" evidence="2">
    <location>
        <position position="101"/>
    </location>
</feature>
<feature type="disulfide bond" evidence="1">
    <location>
        <begin position="52"/>
        <end position="94"/>
    </location>
</feature>
<feature type="disulfide bond" description="Interchain" evidence="1">
    <location>
        <position position="77"/>
    </location>
</feature>
<feature type="disulfide bond" evidence="1">
    <location>
        <begin position="83"/>
        <end position="128"/>
    </location>
</feature>
<feature type="disulfide bond" description="Interchain" evidence="1">
    <location>
        <position position="86"/>
    </location>
</feature>
<feature type="disulfide bond" evidence="1">
    <location>
        <begin position="87"/>
        <end position="130"/>
    </location>
</feature>
<reference key="1">
    <citation type="journal article" date="2009" name="J. Biol. Chem.">
        <title>Snake venom vascular endothelial growth factors (VEGF-Fs) exclusively vary their structures and functions among species.</title>
        <authorList>
            <person name="Yamazaki Y."/>
            <person name="Matsunaga Y."/>
            <person name="Tokunaga Y."/>
            <person name="Obayashi S."/>
            <person name="Saito M."/>
            <person name="Morita T."/>
        </authorList>
    </citation>
    <scope>NUCLEOTIDE SEQUENCE [MRNA]</scope>
    <source>
        <tissue>Venom gland</tissue>
    </source>
</reference>
<keyword id="KW-0037">Angiogenesis</keyword>
<keyword id="KW-0217">Developmental protein</keyword>
<keyword id="KW-0221">Differentiation</keyword>
<keyword id="KW-1015">Disulfide bond</keyword>
<keyword id="KW-0325">Glycoprotein</keyword>
<keyword id="KW-0339">Growth factor</keyword>
<keyword id="KW-0358">Heparin-binding</keyword>
<keyword id="KW-0497">Mitogen</keyword>
<keyword id="KW-0964">Secreted</keyword>
<keyword id="KW-0732">Signal</keyword>
<comment type="function">
    <text evidence="1">Growth factor active in angiogenesis, vasculogenesis and endothelial cell growth. Induces endothelial cell proliferation, promotes cell migration, inhibits apoptosis and induces permeabilization of blood vessels.</text>
</comment>
<comment type="subunit">
    <text evidence="1">Homodimer; disulfide-linked. Also found as heterodimer with PGF. Interacts with FLT1/VEGFR1 and KDR/VEGFR2 receptors, heparan sulfate and heparin.</text>
</comment>
<comment type="subcellular location">
    <subcellularLocation>
        <location evidence="1">Secreted</location>
    </subcellularLocation>
</comment>
<comment type="tissue specificity">
    <text evidence="4">Expressed by the venom gland, and probably other tissues.</text>
</comment>
<comment type="similarity">
    <text evidence="4">Belongs to the PDGF/VEGF growth factor family.</text>
</comment>